<protein>
    <recommendedName>
        <fullName evidence="1">tRNA-modifying protein YgfZ</fullName>
    </recommendedName>
</protein>
<reference key="1">
    <citation type="journal article" date="2011" name="J. Bacteriol.">
        <title>Comparative genomics of 28 Salmonella enterica isolates: evidence for CRISPR-mediated adaptive sublineage evolution.</title>
        <authorList>
            <person name="Fricke W.F."/>
            <person name="Mammel M.K."/>
            <person name="McDermott P.F."/>
            <person name="Tartera C."/>
            <person name="White D.G."/>
            <person name="Leclerc J.E."/>
            <person name="Ravel J."/>
            <person name="Cebula T.A."/>
        </authorList>
    </citation>
    <scope>NUCLEOTIDE SEQUENCE [LARGE SCALE GENOMIC DNA]</scope>
    <source>
        <strain>CVM19633</strain>
    </source>
</reference>
<proteinExistence type="inferred from homology"/>
<feature type="chain" id="PRO_1000138086" description="tRNA-modifying protein YgfZ">
    <location>
        <begin position="1"/>
        <end position="326"/>
    </location>
</feature>
<feature type="binding site" evidence="1">
    <location>
        <position position="27"/>
    </location>
    <ligand>
        <name>folate</name>
        <dbReference type="ChEBI" id="CHEBI:62501"/>
    </ligand>
</feature>
<feature type="binding site" evidence="1">
    <location>
        <position position="189"/>
    </location>
    <ligand>
        <name>folate</name>
        <dbReference type="ChEBI" id="CHEBI:62501"/>
    </ligand>
</feature>
<dbReference type="EMBL" id="CP001127">
    <property type="protein sequence ID" value="ACF92650.1"/>
    <property type="molecule type" value="Genomic_DNA"/>
</dbReference>
<dbReference type="RefSeq" id="WP_000874170.1">
    <property type="nucleotide sequence ID" value="NC_011094.1"/>
</dbReference>
<dbReference type="SMR" id="B4TUR5"/>
<dbReference type="KEGG" id="sew:SeSA_A3217"/>
<dbReference type="HOGENOM" id="CLU_007884_6_1_6"/>
<dbReference type="Proteomes" id="UP000001865">
    <property type="component" value="Chromosome"/>
</dbReference>
<dbReference type="GO" id="GO:0005737">
    <property type="term" value="C:cytoplasm"/>
    <property type="evidence" value="ECO:0007669"/>
    <property type="project" value="UniProtKB-SubCell"/>
</dbReference>
<dbReference type="GO" id="GO:0005542">
    <property type="term" value="F:folic acid binding"/>
    <property type="evidence" value="ECO:0007669"/>
    <property type="project" value="UniProtKB-UniRule"/>
</dbReference>
<dbReference type="GO" id="GO:0016226">
    <property type="term" value="P:iron-sulfur cluster assembly"/>
    <property type="evidence" value="ECO:0007669"/>
    <property type="project" value="TreeGrafter"/>
</dbReference>
<dbReference type="GO" id="GO:0009451">
    <property type="term" value="P:RNA modification"/>
    <property type="evidence" value="ECO:0007669"/>
    <property type="project" value="InterPro"/>
</dbReference>
<dbReference type="GO" id="GO:0008033">
    <property type="term" value="P:tRNA processing"/>
    <property type="evidence" value="ECO:0007669"/>
    <property type="project" value="UniProtKB-UniRule"/>
</dbReference>
<dbReference type="FunFam" id="2.40.30.160:FF:000001">
    <property type="entry name" value="tRNA-modifying protein YgfZ"/>
    <property type="match status" value="1"/>
</dbReference>
<dbReference type="FunFam" id="3.30.70.1400:FF:000002">
    <property type="entry name" value="tRNA-modifying protein YgfZ"/>
    <property type="match status" value="1"/>
</dbReference>
<dbReference type="FunFam" id="3.30.70.1630:FF:000001">
    <property type="entry name" value="tRNA-modifying protein YgfZ"/>
    <property type="match status" value="1"/>
</dbReference>
<dbReference type="Gene3D" id="2.40.30.160">
    <property type="match status" value="1"/>
</dbReference>
<dbReference type="Gene3D" id="3.30.70.1630">
    <property type="match status" value="1"/>
</dbReference>
<dbReference type="Gene3D" id="3.30.70.1400">
    <property type="entry name" value="Aminomethyltransferase beta-barrel domains"/>
    <property type="match status" value="1"/>
</dbReference>
<dbReference type="HAMAP" id="MF_01175">
    <property type="entry name" value="tRNA_modifying_YgfZ"/>
    <property type="match status" value="1"/>
</dbReference>
<dbReference type="InterPro" id="IPR006222">
    <property type="entry name" value="GCV_T_N"/>
</dbReference>
<dbReference type="InterPro" id="IPR029043">
    <property type="entry name" value="GcvT/YgfZ_C"/>
</dbReference>
<dbReference type="InterPro" id="IPR023758">
    <property type="entry name" value="tRNA-modifying_YgfZ"/>
</dbReference>
<dbReference type="InterPro" id="IPR045179">
    <property type="entry name" value="YgfZ/GcvT"/>
</dbReference>
<dbReference type="InterPro" id="IPR017703">
    <property type="entry name" value="YgfZ/GcvT_CS"/>
</dbReference>
<dbReference type="InterPro" id="IPR048451">
    <property type="entry name" value="YgfZ_barrel"/>
</dbReference>
<dbReference type="NCBIfam" id="NF007110">
    <property type="entry name" value="PRK09559.1"/>
    <property type="match status" value="1"/>
</dbReference>
<dbReference type="NCBIfam" id="TIGR03317">
    <property type="entry name" value="ygfZ_signature"/>
    <property type="match status" value="1"/>
</dbReference>
<dbReference type="PANTHER" id="PTHR22602">
    <property type="entry name" value="TRANSFERASE CAF17, MITOCHONDRIAL-RELATED"/>
    <property type="match status" value="1"/>
</dbReference>
<dbReference type="PANTHER" id="PTHR22602:SF0">
    <property type="entry name" value="TRANSFERASE CAF17, MITOCHONDRIAL-RELATED"/>
    <property type="match status" value="1"/>
</dbReference>
<dbReference type="Pfam" id="PF01571">
    <property type="entry name" value="GCV_T"/>
    <property type="match status" value="1"/>
</dbReference>
<dbReference type="Pfam" id="PF21130">
    <property type="entry name" value="YgfZ_barrel"/>
    <property type="match status" value="1"/>
</dbReference>
<dbReference type="SUPFAM" id="SSF101790">
    <property type="entry name" value="Aminomethyltransferase beta-barrel domain"/>
    <property type="match status" value="1"/>
</dbReference>
<dbReference type="SUPFAM" id="SSF103025">
    <property type="entry name" value="Folate-binding domain"/>
    <property type="match status" value="1"/>
</dbReference>
<evidence type="ECO:0000255" key="1">
    <source>
        <dbReference type="HAMAP-Rule" id="MF_01175"/>
    </source>
</evidence>
<name>YGFZ_SALSV</name>
<gene>
    <name evidence="1" type="primary">ygfZ</name>
    <name type="ordered locus">SeSA_A3217</name>
</gene>
<accession>B4TUR5</accession>
<organism>
    <name type="scientific">Salmonella schwarzengrund (strain CVM19633)</name>
    <dbReference type="NCBI Taxonomy" id="439843"/>
    <lineage>
        <taxon>Bacteria</taxon>
        <taxon>Pseudomonadati</taxon>
        <taxon>Pseudomonadota</taxon>
        <taxon>Gammaproteobacteria</taxon>
        <taxon>Enterobacterales</taxon>
        <taxon>Enterobacteriaceae</taxon>
        <taxon>Salmonella</taxon>
    </lineage>
</organism>
<comment type="function">
    <text evidence="1">Folate-binding protein involved in regulating the level of ATP-DnaA and in the modification of some tRNAs. It is probably a key factor in regulatory networks that act via tRNA modification, such as initiation of chromosomal replication.</text>
</comment>
<comment type="subcellular location">
    <subcellularLocation>
        <location evidence="1">Cytoplasm</location>
    </subcellularLocation>
</comment>
<comment type="similarity">
    <text evidence="1">Belongs to the tRNA-modifying YgfZ family.</text>
</comment>
<sequence length="326" mass="36001">MAFISFPPRHPSSSARLPLTLIALDDWALSSITGVDSEKYIQGQVTADVSQMTEQQHLLAAHCDAKGKMWSTLRLFRERDGFAWIERRSVREAQLTELKKYAVFSKVVIAPDDERVLLGVAGFQARAALANVFSELPNSENQVVRDGASTLLWFEHPAERFLLVTDVATANMLTEKLHGEAELNNSQQWLALDIEAGIPVIDAANSGQFIPQATNLQALGGISFKKGCYTGQEMVARAKFRGANKRALWLLAGKASRVPEAGEDLELQMGENWRRTGAILAATQLDDGQLLVQAVMNNDLEAESVFRVRDDANTLHIVPLPYSLEE</sequence>
<keyword id="KW-0963">Cytoplasm</keyword>
<keyword id="KW-0290">Folate-binding</keyword>
<keyword id="KW-0819">tRNA processing</keyword>